<accession>B0XXN5</accession>
<sequence length="699" mass="78077">MPREKQKRGRRAEDKAKKDAAKRKRDEGPEESAVKRLKPSAETNTSNNEIISGADYIPLGQDDGGNDVPMNDAPANDMPFYGLLDSEEQEYFSKANEVLELNQFHDAEERRLFVDSVYREADGKELKVACSQSCSRLMEKLISLSDMRQIRRLFSKFIGHFLHLVQHRFASHCCETLFINAAPGVTEKISKSKGRKAEVDEEDEPEPELSLAEMFMKVVEELEGNWGYLLTERFASHTIRVLLFVLAGEPVDLSSTDSVVASRKKERLGIVNTEAPEEKAAAEKRKVPEVFEATLKKVMNDMVSGLDNTYLRALATHPVGNPVLQVLVFLELSHFGKASAKDPNSIIRRLIPDDDFGENAESSTFVRGLLYDPVGSRLLETIIKSMPGKLFKSLYKNIIRDRIGSLARNTTAGYVVLRTLERLGKDDLQDAMESIIPEIPGLIERSRLIVPKVLIERCLVRGVDTKPLSDALESAYDKDPAQRLEQMLKLEPAASEDDSEEKRKQTGNNQTAAAEKLHGSLLAQTMLTASGPVSGLIYSSLLAQSPDSLLRLAKDPTASRVLQQALTAPTSTSQFRRQFTTRFSGHLVELALDSSGSHVVDALWPATKDLFFVKERMAQELLNEELSLRDSFVGRAVWRNWSMDLYKRRRGEWASKAKGLDSIENGQRERPKSRIDLARAKFAAKAAEESSKAPVAAKT</sequence>
<reference key="1">
    <citation type="journal article" date="2008" name="PLoS Genet.">
        <title>Genomic islands in the pathogenic filamentous fungus Aspergillus fumigatus.</title>
        <authorList>
            <person name="Fedorova N.D."/>
            <person name="Khaldi N."/>
            <person name="Joardar V.S."/>
            <person name="Maiti R."/>
            <person name="Amedeo P."/>
            <person name="Anderson M.J."/>
            <person name="Crabtree J."/>
            <person name="Silva J.C."/>
            <person name="Badger J.H."/>
            <person name="Albarraq A."/>
            <person name="Angiuoli S."/>
            <person name="Bussey H."/>
            <person name="Bowyer P."/>
            <person name="Cotty P.J."/>
            <person name="Dyer P.S."/>
            <person name="Egan A."/>
            <person name="Galens K."/>
            <person name="Fraser-Liggett C.M."/>
            <person name="Haas B.J."/>
            <person name="Inman J.M."/>
            <person name="Kent R."/>
            <person name="Lemieux S."/>
            <person name="Malavazi I."/>
            <person name="Orvis J."/>
            <person name="Roemer T."/>
            <person name="Ronning C.M."/>
            <person name="Sundaram J.P."/>
            <person name="Sutton G."/>
            <person name="Turner G."/>
            <person name="Venter J.C."/>
            <person name="White O.R."/>
            <person name="Whitty B.R."/>
            <person name="Youngman P."/>
            <person name="Wolfe K.H."/>
            <person name="Goldman G.H."/>
            <person name="Wortman J.R."/>
            <person name="Jiang B."/>
            <person name="Denning D.W."/>
            <person name="Nierman W.C."/>
        </authorList>
    </citation>
    <scope>NUCLEOTIDE SEQUENCE [LARGE SCALE GENOMIC DNA]</scope>
    <source>
        <strain>CBS 144.89 / FGSC A1163 / CEA10</strain>
    </source>
</reference>
<gene>
    <name type="primary">nop9</name>
    <name type="ORF">AFUB_038030</name>
</gene>
<organism>
    <name type="scientific">Aspergillus fumigatus (strain CBS 144.89 / FGSC A1163 / CEA10)</name>
    <name type="common">Neosartorya fumigata</name>
    <dbReference type="NCBI Taxonomy" id="451804"/>
    <lineage>
        <taxon>Eukaryota</taxon>
        <taxon>Fungi</taxon>
        <taxon>Dikarya</taxon>
        <taxon>Ascomycota</taxon>
        <taxon>Pezizomycotina</taxon>
        <taxon>Eurotiomycetes</taxon>
        <taxon>Eurotiomycetidae</taxon>
        <taxon>Eurotiales</taxon>
        <taxon>Aspergillaceae</taxon>
        <taxon>Aspergillus</taxon>
        <taxon>Aspergillus subgen. Fumigati</taxon>
    </lineage>
</organism>
<name>NOP9_ASPFC</name>
<comment type="function">
    <text evidence="1">RNA-binding nucleolar protein required for pre-rRNA processing. Involved in production of 18S rRNA and assembly of small ribosomal subunit (By similarity).</text>
</comment>
<comment type="subcellular location">
    <subcellularLocation>
        <location evidence="1">Nucleus</location>
        <location evidence="1">Nucleolus</location>
    </subcellularLocation>
</comment>
<comment type="similarity">
    <text evidence="3">Belongs to the NOP9 family.</text>
</comment>
<protein>
    <recommendedName>
        <fullName>Nucleolar protein 9</fullName>
    </recommendedName>
    <alternativeName>
        <fullName>Pumilio domain-containing protein nop9</fullName>
    </alternativeName>
</protein>
<feature type="chain" id="PRO_0000407797" description="Nucleolar protein 9">
    <location>
        <begin position="1"/>
        <end position="699"/>
    </location>
</feature>
<feature type="repeat" description="Pumilio 1">
    <location>
        <begin position="120"/>
        <end position="155"/>
    </location>
</feature>
<feature type="repeat" description="Pumilio 2">
    <location>
        <begin position="156"/>
        <end position="191"/>
    </location>
</feature>
<feature type="repeat" description="Pumilio 3">
    <location>
        <begin position="361"/>
        <end position="396"/>
    </location>
</feature>
<feature type="repeat" description="Pumilio 4">
    <location>
        <begin position="397"/>
        <end position="433"/>
    </location>
</feature>
<feature type="repeat" description="Pumilio 5">
    <location>
        <begin position="540"/>
        <end position="580"/>
    </location>
</feature>
<feature type="repeat" description="Pumilio 6">
    <location>
        <begin position="582"/>
        <end position="619"/>
    </location>
</feature>
<feature type="region of interest" description="Disordered" evidence="2">
    <location>
        <begin position="1"/>
        <end position="66"/>
    </location>
</feature>
<feature type="region of interest" description="Disordered" evidence="2">
    <location>
        <begin position="491"/>
        <end position="510"/>
    </location>
</feature>
<feature type="compositionally biased region" description="Basic residues" evidence="2">
    <location>
        <begin position="1"/>
        <end position="10"/>
    </location>
</feature>
<feature type="compositionally biased region" description="Basic and acidic residues" evidence="2">
    <location>
        <begin position="11"/>
        <end position="27"/>
    </location>
</feature>
<feature type="compositionally biased region" description="Polar residues" evidence="2">
    <location>
        <begin position="41"/>
        <end position="50"/>
    </location>
</feature>
<proteinExistence type="inferred from homology"/>
<keyword id="KW-0539">Nucleus</keyword>
<keyword id="KW-0677">Repeat</keyword>
<keyword id="KW-0690">Ribosome biogenesis</keyword>
<keyword id="KW-0698">rRNA processing</keyword>
<evidence type="ECO:0000250" key="1"/>
<evidence type="ECO:0000256" key="2">
    <source>
        <dbReference type="SAM" id="MobiDB-lite"/>
    </source>
</evidence>
<evidence type="ECO:0000305" key="3"/>
<dbReference type="EMBL" id="DS499596">
    <property type="protein sequence ID" value="EDP52637.1"/>
    <property type="molecule type" value="Genomic_DNA"/>
</dbReference>
<dbReference type="SMR" id="B0XXN5"/>
<dbReference type="EnsemblFungi" id="EDP52637">
    <property type="protein sequence ID" value="EDP52637"/>
    <property type="gene ID" value="AFUB_038030"/>
</dbReference>
<dbReference type="VEuPathDB" id="FungiDB:AFUB_038030"/>
<dbReference type="HOGENOM" id="CLU_008720_1_1_1"/>
<dbReference type="OrthoDB" id="103029at5052"/>
<dbReference type="PhylomeDB" id="B0XXN5"/>
<dbReference type="Proteomes" id="UP000001699">
    <property type="component" value="Unassembled WGS sequence"/>
</dbReference>
<dbReference type="GO" id="GO:0030686">
    <property type="term" value="C:90S preribosome"/>
    <property type="evidence" value="ECO:0007669"/>
    <property type="project" value="TreeGrafter"/>
</dbReference>
<dbReference type="GO" id="GO:0005730">
    <property type="term" value="C:nucleolus"/>
    <property type="evidence" value="ECO:0007669"/>
    <property type="project" value="UniProtKB-SubCell"/>
</dbReference>
<dbReference type="GO" id="GO:0030688">
    <property type="term" value="C:preribosome, small subunit precursor"/>
    <property type="evidence" value="ECO:0007669"/>
    <property type="project" value="TreeGrafter"/>
</dbReference>
<dbReference type="GO" id="GO:0003723">
    <property type="term" value="F:RNA binding"/>
    <property type="evidence" value="ECO:0007669"/>
    <property type="project" value="InterPro"/>
</dbReference>
<dbReference type="GO" id="GO:0000480">
    <property type="term" value="P:endonucleolytic cleavage in 5'-ETS of tricistronic rRNA transcript (SSU-rRNA, 5.8S rRNA, LSU-rRNA)"/>
    <property type="evidence" value="ECO:0007669"/>
    <property type="project" value="TreeGrafter"/>
</dbReference>
<dbReference type="GO" id="GO:0000447">
    <property type="term" value="P:endonucleolytic cleavage in ITS1 to separate SSU-rRNA from 5.8S rRNA and LSU-rRNA from tricistronic rRNA transcript (SSU-rRNA, 5.8S rRNA, LSU-rRNA)"/>
    <property type="evidence" value="ECO:0007669"/>
    <property type="project" value="TreeGrafter"/>
</dbReference>
<dbReference type="GO" id="GO:0000472">
    <property type="term" value="P:endonucleolytic cleavage to generate mature 5'-end of SSU-rRNA from (SSU-rRNA, 5.8S rRNA, LSU-rRNA)"/>
    <property type="evidence" value="ECO:0007669"/>
    <property type="project" value="TreeGrafter"/>
</dbReference>
<dbReference type="GO" id="GO:0000056">
    <property type="term" value="P:ribosomal small subunit export from nucleus"/>
    <property type="evidence" value="ECO:0007669"/>
    <property type="project" value="TreeGrafter"/>
</dbReference>
<dbReference type="Gene3D" id="1.25.10.10">
    <property type="entry name" value="Leucine-rich Repeat Variant"/>
    <property type="match status" value="2"/>
</dbReference>
<dbReference type="InterPro" id="IPR011989">
    <property type="entry name" value="ARM-like"/>
</dbReference>
<dbReference type="InterPro" id="IPR016024">
    <property type="entry name" value="ARM-type_fold"/>
</dbReference>
<dbReference type="InterPro" id="IPR040000">
    <property type="entry name" value="NOP9"/>
</dbReference>
<dbReference type="InterPro" id="IPR001313">
    <property type="entry name" value="Pumilio_RNA-bd_rpt"/>
</dbReference>
<dbReference type="PANTHER" id="PTHR13102">
    <property type="entry name" value="NUCLEOLAR PROTEIN 9"/>
    <property type="match status" value="1"/>
</dbReference>
<dbReference type="PANTHER" id="PTHR13102:SF0">
    <property type="entry name" value="NUCLEOLAR PROTEIN 9"/>
    <property type="match status" value="1"/>
</dbReference>
<dbReference type="Pfam" id="PF22493">
    <property type="entry name" value="PUF_NOP9"/>
    <property type="match status" value="1"/>
</dbReference>
<dbReference type="SMART" id="SM00025">
    <property type="entry name" value="Pumilio"/>
    <property type="match status" value="5"/>
</dbReference>
<dbReference type="SUPFAM" id="SSF48371">
    <property type="entry name" value="ARM repeat"/>
    <property type="match status" value="1"/>
</dbReference>